<evidence type="ECO:0000255" key="1">
    <source>
        <dbReference type="HAMAP-Rule" id="MF_00361"/>
    </source>
</evidence>
<proteinExistence type="inferred from homology"/>
<protein>
    <recommendedName>
        <fullName evidence="1">NAD kinase</fullName>
        <ecNumber evidence="1">2.7.1.23</ecNumber>
    </recommendedName>
    <alternativeName>
        <fullName evidence="1">ATP-dependent NAD kinase</fullName>
    </alternativeName>
</protein>
<reference key="1">
    <citation type="journal article" date="2009" name="Infect. Immun.">
        <title>Comparative genomics reveal extensive transposon-mediated genomic plasticity and diversity among potential effector proteins within the genus Coxiella.</title>
        <authorList>
            <person name="Beare P.A."/>
            <person name="Unsworth N."/>
            <person name="Andoh M."/>
            <person name="Voth D.E."/>
            <person name="Omsland A."/>
            <person name="Gilk S.D."/>
            <person name="Williams K.P."/>
            <person name="Sobral B.W."/>
            <person name="Kupko J.J. III"/>
            <person name="Porcella S.F."/>
            <person name="Samuel J.E."/>
            <person name="Heinzen R.A."/>
        </authorList>
    </citation>
    <scope>NUCLEOTIDE SEQUENCE [LARGE SCALE GENOMIC DNA]</scope>
    <source>
        <strain>CbuG_Q212</strain>
    </source>
</reference>
<comment type="function">
    <text evidence="1">Involved in the regulation of the intracellular balance of NAD and NADP, and is a key enzyme in the biosynthesis of NADP. Catalyzes specifically the phosphorylation on 2'-hydroxyl of the adenosine moiety of NAD to yield NADP.</text>
</comment>
<comment type="catalytic activity">
    <reaction evidence="1">
        <text>NAD(+) + ATP = ADP + NADP(+) + H(+)</text>
        <dbReference type="Rhea" id="RHEA:18629"/>
        <dbReference type="ChEBI" id="CHEBI:15378"/>
        <dbReference type="ChEBI" id="CHEBI:30616"/>
        <dbReference type="ChEBI" id="CHEBI:57540"/>
        <dbReference type="ChEBI" id="CHEBI:58349"/>
        <dbReference type="ChEBI" id="CHEBI:456216"/>
        <dbReference type="EC" id="2.7.1.23"/>
    </reaction>
</comment>
<comment type="cofactor">
    <cofactor evidence="1">
        <name>a divalent metal cation</name>
        <dbReference type="ChEBI" id="CHEBI:60240"/>
    </cofactor>
</comment>
<comment type="subcellular location">
    <subcellularLocation>
        <location evidence="1">Cytoplasm</location>
    </subcellularLocation>
</comment>
<comment type="similarity">
    <text evidence="1">Belongs to the NAD kinase family.</text>
</comment>
<keyword id="KW-0067">ATP-binding</keyword>
<keyword id="KW-0963">Cytoplasm</keyword>
<keyword id="KW-0418">Kinase</keyword>
<keyword id="KW-0520">NAD</keyword>
<keyword id="KW-0521">NADP</keyword>
<keyword id="KW-0547">Nucleotide-binding</keyword>
<keyword id="KW-0808">Transferase</keyword>
<accession>B6IZI4</accession>
<sequence>MLKIVSKPSFNRIALMGREGVEGVPETLAALKDYLVSLNREVILEENAAHMIDGSRLLTVPANDLKKKADLLIVVGGDGSLLNAAHIAVPQQLPVLGINRGRLGFLTDIPPNELTQISDILDGHYREEVRFLLEGTVEEGDEIVAQGIALNDIVLLPGNAPKMIEFDIFINDEFVCNQRADGLIITTPTGSTAYALSGGGPILHPQLNAMALVPMFPHTLSSRPIVVDAESQIKITISPENDVSPYVSNDGQERVSIKPGGNVYTRKYHYPLHLIHPTDYNYYDTLRRKLDWEKRAAKV</sequence>
<gene>
    <name evidence="1" type="primary">nadK</name>
    <name type="ordered locus">CbuG_0712</name>
</gene>
<dbReference type="EC" id="2.7.1.23" evidence="1"/>
<dbReference type="EMBL" id="CP001019">
    <property type="protein sequence ID" value="ACJ18112.1"/>
    <property type="molecule type" value="Genomic_DNA"/>
</dbReference>
<dbReference type="RefSeq" id="WP_005772537.1">
    <property type="nucleotide sequence ID" value="NC_011527.1"/>
</dbReference>
<dbReference type="SMR" id="B6IZI4"/>
<dbReference type="KEGG" id="cbg:CbuG_0712"/>
<dbReference type="HOGENOM" id="CLU_008831_0_1_6"/>
<dbReference type="GO" id="GO:0005737">
    <property type="term" value="C:cytoplasm"/>
    <property type="evidence" value="ECO:0007669"/>
    <property type="project" value="UniProtKB-SubCell"/>
</dbReference>
<dbReference type="GO" id="GO:0005524">
    <property type="term" value="F:ATP binding"/>
    <property type="evidence" value="ECO:0007669"/>
    <property type="project" value="UniProtKB-KW"/>
</dbReference>
<dbReference type="GO" id="GO:0046872">
    <property type="term" value="F:metal ion binding"/>
    <property type="evidence" value="ECO:0007669"/>
    <property type="project" value="UniProtKB-UniRule"/>
</dbReference>
<dbReference type="GO" id="GO:0051287">
    <property type="term" value="F:NAD binding"/>
    <property type="evidence" value="ECO:0007669"/>
    <property type="project" value="UniProtKB-ARBA"/>
</dbReference>
<dbReference type="GO" id="GO:0003951">
    <property type="term" value="F:NAD+ kinase activity"/>
    <property type="evidence" value="ECO:0007669"/>
    <property type="project" value="UniProtKB-UniRule"/>
</dbReference>
<dbReference type="GO" id="GO:0019674">
    <property type="term" value="P:NAD metabolic process"/>
    <property type="evidence" value="ECO:0007669"/>
    <property type="project" value="InterPro"/>
</dbReference>
<dbReference type="GO" id="GO:0006741">
    <property type="term" value="P:NADP biosynthetic process"/>
    <property type="evidence" value="ECO:0007669"/>
    <property type="project" value="UniProtKB-UniRule"/>
</dbReference>
<dbReference type="FunFam" id="2.60.200.30:FF:000009">
    <property type="entry name" value="Poly(P)/ATP NAD kinase"/>
    <property type="match status" value="1"/>
</dbReference>
<dbReference type="Gene3D" id="3.40.50.10330">
    <property type="entry name" value="Probable inorganic polyphosphate/atp-NAD kinase, domain 1"/>
    <property type="match status" value="1"/>
</dbReference>
<dbReference type="Gene3D" id="2.60.200.30">
    <property type="entry name" value="Probable inorganic polyphosphate/atp-NAD kinase, domain 2"/>
    <property type="match status" value="1"/>
</dbReference>
<dbReference type="HAMAP" id="MF_00361">
    <property type="entry name" value="NAD_kinase"/>
    <property type="match status" value="1"/>
</dbReference>
<dbReference type="InterPro" id="IPR017438">
    <property type="entry name" value="ATP-NAD_kinase_N"/>
</dbReference>
<dbReference type="InterPro" id="IPR017437">
    <property type="entry name" value="ATP-NAD_kinase_PpnK-typ_C"/>
</dbReference>
<dbReference type="InterPro" id="IPR016064">
    <property type="entry name" value="NAD/diacylglycerol_kinase_sf"/>
</dbReference>
<dbReference type="InterPro" id="IPR002504">
    <property type="entry name" value="NADK"/>
</dbReference>
<dbReference type="NCBIfam" id="NF002306">
    <property type="entry name" value="PRK01231.1"/>
    <property type="match status" value="1"/>
</dbReference>
<dbReference type="PANTHER" id="PTHR20275">
    <property type="entry name" value="NAD KINASE"/>
    <property type="match status" value="1"/>
</dbReference>
<dbReference type="PANTHER" id="PTHR20275:SF0">
    <property type="entry name" value="NAD KINASE"/>
    <property type="match status" value="1"/>
</dbReference>
<dbReference type="Pfam" id="PF01513">
    <property type="entry name" value="NAD_kinase"/>
    <property type="match status" value="1"/>
</dbReference>
<dbReference type="Pfam" id="PF20143">
    <property type="entry name" value="NAD_kinase_C"/>
    <property type="match status" value="1"/>
</dbReference>
<dbReference type="SUPFAM" id="SSF111331">
    <property type="entry name" value="NAD kinase/diacylglycerol kinase-like"/>
    <property type="match status" value="1"/>
</dbReference>
<name>NADK_COXB2</name>
<organism>
    <name type="scientific">Coxiella burnetii (strain CbuG_Q212)</name>
    <name type="common">Coxiella burnetii (strain Q212)</name>
    <dbReference type="NCBI Taxonomy" id="434923"/>
    <lineage>
        <taxon>Bacteria</taxon>
        <taxon>Pseudomonadati</taxon>
        <taxon>Pseudomonadota</taxon>
        <taxon>Gammaproteobacteria</taxon>
        <taxon>Legionellales</taxon>
        <taxon>Coxiellaceae</taxon>
        <taxon>Coxiella</taxon>
    </lineage>
</organism>
<feature type="chain" id="PRO_1000120849" description="NAD kinase">
    <location>
        <begin position="1"/>
        <end position="299"/>
    </location>
</feature>
<feature type="active site" description="Proton acceptor" evidence="1">
    <location>
        <position position="78"/>
    </location>
</feature>
<feature type="binding site" evidence="1">
    <location>
        <begin position="78"/>
        <end position="79"/>
    </location>
    <ligand>
        <name>NAD(+)</name>
        <dbReference type="ChEBI" id="CHEBI:57540"/>
    </ligand>
</feature>
<feature type="binding site" evidence="1">
    <location>
        <begin position="151"/>
        <end position="152"/>
    </location>
    <ligand>
        <name>NAD(+)</name>
        <dbReference type="ChEBI" id="CHEBI:57540"/>
    </ligand>
</feature>
<feature type="binding site" evidence="1">
    <location>
        <position position="162"/>
    </location>
    <ligand>
        <name>NAD(+)</name>
        <dbReference type="ChEBI" id="CHEBI:57540"/>
    </ligand>
</feature>
<feature type="binding site" evidence="1">
    <location>
        <position position="179"/>
    </location>
    <ligand>
        <name>NAD(+)</name>
        <dbReference type="ChEBI" id="CHEBI:57540"/>
    </ligand>
</feature>
<feature type="binding site" evidence="1">
    <location>
        <position position="181"/>
    </location>
    <ligand>
        <name>NAD(+)</name>
        <dbReference type="ChEBI" id="CHEBI:57540"/>
    </ligand>
</feature>
<feature type="binding site" evidence="1">
    <location>
        <begin position="192"/>
        <end position="197"/>
    </location>
    <ligand>
        <name>NAD(+)</name>
        <dbReference type="ChEBI" id="CHEBI:57540"/>
    </ligand>
</feature>
<feature type="binding site" evidence="1">
    <location>
        <position position="252"/>
    </location>
    <ligand>
        <name>NAD(+)</name>
        <dbReference type="ChEBI" id="CHEBI:57540"/>
    </ligand>
</feature>